<accession>Q7N1C1</accession>
<dbReference type="EMBL" id="BX571871">
    <property type="protein sequence ID" value="CAE15928.1"/>
    <property type="molecule type" value="Genomic_DNA"/>
</dbReference>
<dbReference type="RefSeq" id="WP_011147735.1">
    <property type="nucleotide sequence ID" value="NC_005126.1"/>
</dbReference>
<dbReference type="SMR" id="Q7N1C1"/>
<dbReference type="STRING" id="243265.plu3555"/>
<dbReference type="GeneID" id="48849797"/>
<dbReference type="KEGG" id="plu:plu3555"/>
<dbReference type="eggNOG" id="COG2938">
    <property type="taxonomic scope" value="Bacteria"/>
</dbReference>
<dbReference type="HOGENOM" id="CLU_103054_2_2_6"/>
<dbReference type="OrthoDB" id="9180899at2"/>
<dbReference type="Proteomes" id="UP000002514">
    <property type="component" value="Chromosome"/>
</dbReference>
<dbReference type="GO" id="GO:0005737">
    <property type="term" value="C:cytoplasm"/>
    <property type="evidence" value="ECO:0007669"/>
    <property type="project" value="UniProtKB-SubCell"/>
</dbReference>
<dbReference type="GO" id="GO:0006105">
    <property type="term" value="P:succinate metabolic process"/>
    <property type="evidence" value="ECO:0007669"/>
    <property type="project" value="TreeGrafter"/>
</dbReference>
<dbReference type="FunFam" id="1.10.150.250:FF:000001">
    <property type="entry name" value="FAD assembly factor SdhE"/>
    <property type="match status" value="1"/>
</dbReference>
<dbReference type="Gene3D" id="1.10.150.250">
    <property type="entry name" value="Flavinator of succinate dehydrogenase"/>
    <property type="match status" value="1"/>
</dbReference>
<dbReference type="InterPro" id="IPR005631">
    <property type="entry name" value="SDH"/>
</dbReference>
<dbReference type="InterPro" id="IPR036714">
    <property type="entry name" value="SDH_sf"/>
</dbReference>
<dbReference type="InterPro" id="IPR050531">
    <property type="entry name" value="SdhE_FAD_assembly_factor"/>
</dbReference>
<dbReference type="NCBIfam" id="NF008130">
    <property type="entry name" value="PRK10878.1"/>
    <property type="match status" value="1"/>
</dbReference>
<dbReference type="PANTHER" id="PTHR39585">
    <property type="entry name" value="FAD ASSEMBLY FACTOR SDHE"/>
    <property type="match status" value="1"/>
</dbReference>
<dbReference type="PANTHER" id="PTHR39585:SF1">
    <property type="entry name" value="FAD ASSEMBLY FACTOR SDHE"/>
    <property type="match status" value="1"/>
</dbReference>
<dbReference type="Pfam" id="PF03937">
    <property type="entry name" value="Sdh5"/>
    <property type="match status" value="1"/>
</dbReference>
<dbReference type="SUPFAM" id="SSF109910">
    <property type="entry name" value="YgfY-like"/>
    <property type="match status" value="1"/>
</dbReference>
<organism>
    <name type="scientific">Photorhabdus laumondii subsp. laumondii (strain DSM 15139 / CIP 105565 / TT01)</name>
    <name type="common">Photorhabdus luminescens subsp. laumondii</name>
    <dbReference type="NCBI Taxonomy" id="243265"/>
    <lineage>
        <taxon>Bacteria</taxon>
        <taxon>Pseudomonadati</taxon>
        <taxon>Pseudomonadota</taxon>
        <taxon>Gammaproteobacteria</taxon>
        <taxon>Enterobacterales</taxon>
        <taxon>Morganellaceae</taxon>
        <taxon>Photorhabdus</taxon>
    </lineage>
</organism>
<reference key="1">
    <citation type="journal article" date="2003" name="Nat. Biotechnol.">
        <title>The genome sequence of the entomopathogenic bacterium Photorhabdus luminescens.</title>
        <authorList>
            <person name="Duchaud E."/>
            <person name="Rusniok C."/>
            <person name="Frangeul L."/>
            <person name="Buchrieser C."/>
            <person name="Givaudan A."/>
            <person name="Taourit S."/>
            <person name="Bocs S."/>
            <person name="Boursaux-Eude C."/>
            <person name="Chandler M."/>
            <person name="Charles J.-F."/>
            <person name="Dassa E."/>
            <person name="Derose R."/>
            <person name="Derzelle S."/>
            <person name="Freyssinet G."/>
            <person name="Gaudriault S."/>
            <person name="Medigue C."/>
            <person name="Lanois A."/>
            <person name="Powell K."/>
            <person name="Siguier P."/>
            <person name="Vincent R."/>
            <person name="Wingate V."/>
            <person name="Zouine M."/>
            <person name="Glaser P."/>
            <person name="Boemare N."/>
            <person name="Danchin A."/>
            <person name="Kunst F."/>
        </authorList>
    </citation>
    <scope>NUCLEOTIDE SEQUENCE [LARGE SCALE GENOMIC DNA]</scope>
    <source>
        <strain>DSM 15139 / CIP 105565 / TT01</strain>
    </source>
</reference>
<feature type="chain" id="PRO_0000214409" description="FAD assembly factor SdhE">
    <location>
        <begin position="1"/>
        <end position="88"/>
    </location>
</feature>
<gene>
    <name type="primary">sdhE</name>
    <name type="ordered locus">plu3555</name>
</gene>
<protein>
    <recommendedName>
        <fullName>FAD assembly factor SdhE</fullName>
    </recommendedName>
</protein>
<name>SDHE_PHOLL</name>
<keyword id="KW-0143">Chaperone</keyword>
<keyword id="KW-0963">Cytoplasm</keyword>
<keyword id="KW-1185">Reference proteome</keyword>
<comment type="function">
    <text evidence="1">An FAD assembly protein, which accelerates covalent attachment of the cofactor into other proteins. Plays an essential role in the assembly of succinate dehydrogenase (SDH, respiratory complex II), an enzyme complex that is a component of both the tricarboxylic acid cycle and the electron transport chain, and which couples the oxidation of succinate to fumarate with the reduction of ubiquinone (coenzyme Q) to ubiquinol. Required for flavinylation (covalent attachment of FAD) of the flavoprotein subunit SdhA of SDH and other flavinylated proteins as well.</text>
</comment>
<comment type="subunit">
    <text evidence="2">Monomer.</text>
</comment>
<comment type="subcellular location">
    <subcellularLocation>
        <location evidence="1">Cytoplasm</location>
    </subcellularLocation>
</comment>
<comment type="similarity">
    <text evidence="3">Belongs to the SdhE FAD assembly factor family.</text>
</comment>
<sequence>MDIDNKARIHWACRRGMRELDISIMPFFKYEYDSLSDDDKRLFIRLLACADPDLFNWLMNHGRPEDEELFRMIKLIQNRNKDRGPVEV</sequence>
<proteinExistence type="inferred from homology"/>
<evidence type="ECO:0000250" key="1">
    <source>
        <dbReference type="UniProtKB" id="G4V4G2"/>
    </source>
</evidence>
<evidence type="ECO:0000250" key="2">
    <source>
        <dbReference type="UniProtKB" id="P64559"/>
    </source>
</evidence>
<evidence type="ECO:0000305" key="3"/>